<proteinExistence type="evidence at protein level"/>
<organism>
    <name type="scientific">Conus lividus</name>
    <name type="common">Livid cone</name>
    <dbReference type="NCBI Taxonomy" id="89426"/>
    <lineage>
        <taxon>Eukaryota</taxon>
        <taxon>Metazoa</taxon>
        <taxon>Spiralia</taxon>
        <taxon>Lophotrochozoa</taxon>
        <taxon>Mollusca</taxon>
        <taxon>Gastropoda</taxon>
        <taxon>Caenogastropoda</taxon>
        <taxon>Neogastropoda</taxon>
        <taxon>Conoidea</taxon>
        <taxon>Conidae</taxon>
        <taxon>Conus</taxon>
        <taxon>Lividoconus</taxon>
    </lineage>
</organism>
<evidence type="ECO:0000250" key="1">
    <source>
        <dbReference type="UniProtKB" id="P0C248"/>
    </source>
</evidence>
<evidence type="ECO:0000250" key="2">
    <source>
        <dbReference type="UniProtKB" id="P0C250"/>
    </source>
</evidence>
<evidence type="ECO:0000250" key="3">
    <source>
        <dbReference type="UniProtKB" id="P62903"/>
    </source>
</evidence>
<evidence type="ECO:0000250" key="4">
    <source>
        <dbReference type="UniProtKB" id="P83047"/>
    </source>
</evidence>
<evidence type="ECO:0000269" key="5">
    <source>
    </source>
</evidence>
<evidence type="ECO:0000303" key="6">
    <source>
    </source>
</evidence>
<evidence type="ECO:0000305" key="7"/>
<evidence type="ECO:0000305" key="8">
    <source>
    </source>
</evidence>
<accession>P0DUC8</accession>
<reference key="1">
    <citation type="journal article" date="2017" name="Toxicon">
        <title>Identification of short single disulfide-containing contryphans from the venom of cone snails using de novo mass spectrometry-based sequencing methods.</title>
        <authorList>
            <person name="Franklin J.B."/>
            <person name="Rajesh R.P."/>
            <person name="Vinithkumar N.V."/>
            <person name="Kirubagaran R."/>
        </authorList>
    </citation>
    <scope>PROTEIN SEQUENCE</scope>
    <scope>SUBCELLULAR LOCATION</scope>
    <scope>MASS SPECTROMETRY</scope>
    <scope>DISULFIDE BOND</scope>
    <source>
        <tissue>Venom</tissue>
    </source>
</reference>
<keyword id="KW-0903">Direct protein sequencing</keyword>
<keyword id="KW-1015">Disulfide bond</keyword>
<keyword id="KW-0872">Ion channel impairing toxin</keyword>
<keyword id="KW-0964">Secreted</keyword>
<keyword id="KW-0800">Toxin</keyword>
<feature type="peptide" id="PRO_0000451482" description="Contryphan Li834" evidence="5">
    <location>
        <begin position="1"/>
        <end position="7"/>
    </location>
</feature>
<feature type="disulfide bond" evidence="5">
    <location>
        <begin position="1"/>
        <end position="7"/>
    </location>
</feature>
<protein>
    <recommendedName>
        <fullName evidence="6">Contryphan Li834</fullName>
    </recommendedName>
</protein>
<sequence>CYRPPVC</sequence>
<dbReference type="GO" id="GO:0005576">
    <property type="term" value="C:extracellular region"/>
    <property type="evidence" value="ECO:0007669"/>
    <property type="project" value="UniProtKB-SubCell"/>
</dbReference>
<dbReference type="GO" id="GO:0099106">
    <property type="term" value="F:ion channel regulator activity"/>
    <property type="evidence" value="ECO:0007669"/>
    <property type="project" value="UniProtKB-KW"/>
</dbReference>
<dbReference type="GO" id="GO:0090729">
    <property type="term" value="F:toxin activity"/>
    <property type="evidence" value="ECO:0007669"/>
    <property type="project" value="UniProtKB-KW"/>
</dbReference>
<comment type="function">
    <text evidence="1 2 3 4">Its target is unknown, but this toxin may modulate voltage-activated calcium channels (Cav) or calcium-dependent potassium channels (KCa).</text>
</comment>
<comment type="subcellular location">
    <subcellularLocation>
        <location evidence="5">Secreted</location>
    </subcellularLocation>
</comment>
<comment type="tissue specificity">
    <text evidence="8">Expressed by the venom duct.</text>
</comment>
<comment type="domain">
    <text evidence="7">The cysteine framework is C-C.</text>
</comment>
<comment type="mass spectrometry">
    <text>Average mass.</text>
</comment>
<comment type="similarity">
    <text evidence="7">Belongs to the O2 superfamily. Contryphan family.</text>
</comment>
<name>COW34_CONLI</name>